<sequence>MEGSGGGAGERAPLLGARRAAAAAAAAGAFAGRRAACGAVLLTELLERAAFYGITSNLVLFLNGAPFCWEGAQASEALLLFMGLTYLGSPFGGWLADARLGRARAILLSLALYLLGMLAFPLLAAPATRAALCGSARLLNCTAPGPDAAARCCSPATFAGLVLVGLGVATVKANITPFGADQVKDRGPEATRRFFNWFYWSINLGAILSLGGIAYIQQNVSFVTGYAIPTVCVGLAFVVFLCGQSVFITKPPDGSAFTDMFKILTYSCCSQKRSGERQSNGEGIGVFQQSSKQSLFDSCKMSHGGPFTEEKVEDVKALVKIVPVFLALIPYWTVYFQMQTTYVLQSLHLRIPEISNITTTPHTLPAAWLTMFDAVLILLLIPLKDKLVDPILRRHGLLPSSLKRIAVGMFFVMCSAFAAGILESKRLNLVKEKTINQTIGNVVYHAADLSLWWQVPQYLLIGISEIFASIAGLEFAYSAAPKSMQSAIMGLFFFFSGVGSFVGSGLLALVSIKAIGWMSSHTDFGNINGCYLNYYFFLLAAIQGATLLLFLIISVKYDHHRDHQRSRANGVPTSRRA</sequence>
<proteinExistence type="evidence at protein level"/>
<accession>Q8N697</accession>
<accession>A6H8Y9</accession>
<accession>B3KTK1</accession>
<accession>Q71M34</accession>
<accession>Q7Z5F8</accession>
<accession>Q8TAH0</accession>
<evidence type="ECO:0000250" key="1">
    <source>
        <dbReference type="UniProtKB" id="O09014"/>
    </source>
</evidence>
<evidence type="ECO:0000250" key="2">
    <source>
        <dbReference type="UniProtKB" id="Q91W98"/>
    </source>
</evidence>
<evidence type="ECO:0000255" key="3"/>
<evidence type="ECO:0000269" key="4">
    <source>
    </source>
</evidence>
<evidence type="ECO:0000269" key="5">
    <source>
    </source>
</evidence>
<evidence type="ECO:0000269" key="6">
    <source>
    </source>
</evidence>
<evidence type="ECO:0000269" key="7">
    <source>
    </source>
</evidence>
<evidence type="ECO:0000269" key="8">
    <source>
    </source>
</evidence>
<evidence type="ECO:0000269" key="9">
    <source>
    </source>
</evidence>
<evidence type="ECO:0000269" key="10">
    <source>
    </source>
</evidence>
<evidence type="ECO:0000303" key="11">
    <source>
    </source>
</evidence>
<evidence type="ECO:0000303" key="12">
    <source>
    </source>
</evidence>
<evidence type="ECO:0000303" key="13">
    <source>
    </source>
</evidence>
<evidence type="ECO:0000303" key="14">
    <source>
    </source>
</evidence>
<evidence type="ECO:0000303" key="15">
    <source ref="2"/>
</evidence>
<evidence type="ECO:0000305" key="16"/>
<evidence type="ECO:0000312" key="17">
    <source>
        <dbReference type="HGNC" id="HGNC:23090"/>
    </source>
</evidence>
<evidence type="ECO:0007744" key="18">
    <source>
    </source>
</evidence>
<evidence type="ECO:0007829" key="19">
    <source>
        <dbReference type="PDB" id="8JZX"/>
    </source>
</evidence>
<evidence type="ECO:0007829" key="20">
    <source>
        <dbReference type="PDB" id="8QSL"/>
    </source>
</evidence>
<evidence type="ECO:0007829" key="21">
    <source>
        <dbReference type="PDB" id="8WX3"/>
    </source>
</evidence>
<evidence type="ECO:0007829" key="22">
    <source>
        <dbReference type="PDB" id="8WX4"/>
    </source>
</evidence>
<dbReference type="EMBL" id="AY050629">
    <property type="protein sequence ID" value="AAK95565.1"/>
    <property type="status" value="ALT_FRAME"/>
    <property type="molecule type" value="mRNA"/>
</dbReference>
<dbReference type="EMBL" id="AY038999">
    <property type="protein sequence ID" value="AAK72099.1"/>
    <property type="molecule type" value="mRNA"/>
</dbReference>
<dbReference type="EMBL" id="AF461893">
    <property type="protein sequence ID" value="AAQ04807.1"/>
    <property type="status" value="ALT_FRAME"/>
    <property type="molecule type" value="mRNA"/>
</dbReference>
<dbReference type="EMBL" id="AK095717">
    <property type="protein sequence ID" value="BAG53113.1"/>
    <property type="molecule type" value="mRNA"/>
</dbReference>
<dbReference type="EMBL" id="CH471054">
    <property type="protein sequence ID" value="EAW98494.1"/>
    <property type="molecule type" value="Genomic_DNA"/>
</dbReference>
<dbReference type="EMBL" id="BC028394">
    <property type="protein sequence ID" value="AAH28394.2"/>
    <property type="molecule type" value="mRNA"/>
</dbReference>
<dbReference type="EMBL" id="BC146803">
    <property type="protein sequence ID" value="AAI46804.1"/>
    <property type="status" value="ALT_FRAME"/>
    <property type="molecule type" value="mRNA"/>
</dbReference>
<dbReference type="CCDS" id="CCDS9264.1">
    <molecule id="Q8N697-1"/>
</dbReference>
<dbReference type="RefSeq" id="NP_663623.1">
    <molecule id="Q8N697-1"/>
    <property type="nucleotide sequence ID" value="NM_145648.4"/>
</dbReference>
<dbReference type="PDB" id="8JZR">
    <property type="method" value="EM"/>
    <property type="resolution" value="3.25 A"/>
    <property type="chains" value="B=1-577"/>
</dbReference>
<dbReference type="PDB" id="8JZS">
    <property type="method" value="EM"/>
    <property type="resolution" value="2.95 A"/>
    <property type="chains" value="A/B=1-577"/>
</dbReference>
<dbReference type="PDB" id="8JZU">
    <property type="method" value="EM"/>
    <property type="resolution" value="3.05 A"/>
    <property type="chains" value="A=1-577"/>
</dbReference>
<dbReference type="PDB" id="8JZX">
    <property type="method" value="EM"/>
    <property type="resolution" value="2.50 A"/>
    <property type="chains" value="A/B=1-577"/>
</dbReference>
<dbReference type="PDB" id="8P6A">
    <property type="method" value="EM"/>
    <property type="resolution" value="3.63 A"/>
    <property type="chains" value="A=1-577"/>
</dbReference>
<dbReference type="PDB" id="8QSK">
    <property type="method" value="EM"/>
    <property type="resolution" value="3.30 A"/>
    <property type="chains" value="A/C=1-577"/>
</dbReference>
<dbReference type="PDB" id="8QSL">
    <property type="method" value="EM"/>
    <property type="resolution" value="2.81 A"/>
    <property type="chains" value="A/C=1-577"/>
</dbReference>
<dbReference type="PDB" id="8QSM">
    <property type="method" value="EM"/>
    <property type="resolution" value="3.69 A"/>
    <property type="chains" value="A=1-577"/>
</dbReference>
<dbReference type="PDB" id="8QSN">
    <property type="method" value="EM"/>
    <property type="resolution" value="3.54 A"/>
    <property type="chains" value="A=1-577"/>
</dbReference>
<dbReference type="PDB" id="8WX3">
    <property type="method" value="EM"/>
    <property type="resolution" value="2.83 A"/>
    <property type="chains" value="A/B=1-577"/>
</dbReference>
<dbReference type="PDB" id="8WX4">
    <property type="method" value="EM"/>
    <property type="resolution" value="3.12 A"/>
    <property type="chains" value="A/B=1-577"/>
</dbReference>
<dbReference type="PDB" id="8WX5">
    <property type="method" value="EM"/>
    <property type="resolution" value="3.91 A"/>
    <property type="chains" value="A=1-577"/>
</dbReference>
<dbReference type="PDBsum" id="8JZR"/>
<dbReference type="PDBsum" id="8JZS"/>
<dbReference type="PDBsum" id="8JZU"/>
<dbReference type="PDBsum" id="8JZX"/>
<dbReference type="PDBsum" id="8P6A"/>
<dbReference type="PDBsum" id="8QSK"/>
<dbReference type="PDBsum" id="8QSL"/>
<dbReference type="PDBsum" id="8QSM"/>
<dbReference type="PDBsum" id="8QSN"/>
<dbReference type="PDBsum" id="8WX3"/>
<dbReference type="PDBsum" id="8WX4"/>
<dbReference type="PDBsum" id="8WX5"/>
<dbReference type="EMDB" id="EMD-17462"/>
<dbReference type="EMDB" id="EMD-18634"/>
<dbReference type="EMDB" id="EMD-18635"/>
<dbReference type="EMDB" id="EMD-18636"/>
<dbReference type="EMDB" id="EMD-18637"/>
<dbReference type="EMDB" id="EMD-36751"/>
<dbReference type="EMDB" id="EMD-36752"/>
<dbReference type="EMDB" id="EMD-36753"/>
<dbReference type="EMDB" id="EMD-36754"/>
<dbReference type="EMDB" id="EMD-37899"/>
<dbReference type="EMDB" id="EMD-37900"/>
<dbReference type="EMDB" id="EMD-37901"/>
<dbReference type="SMR" id="Q8N697"/>
<dbReference type="BioGRID" id="125714">
    <property type="interactions" value="69"/>
</dbReference>
<dbReference type="DIP" id="DIP-60839N"/>
<dbReference type="FunCoup" id="Q8N697">
    <property type="interactions" value="1475"/>
</dbReference>
<dbReference type="IntAct" id="Q8N697">
    <property type="interactions" value="64"/>
</dbReference>
<dbReference type="MINT" id="Q8N697"/>
<dbReference type="STRING" id="9606.ENSP00000266771"/>
<dbReference type="GuidetoPHARMACOLOGY" id="987"/>
<dbReference type="TCDB" id="2.A.17.3.11">
    <property type="family name" value="the proton-dependent oligopeptide transporter (pot/ptr) family"/>
</dbReference>
<dbReference type="GlyGen" id="Q8N697">
    <property type="glycosylation" value="2 sites, 3 N-linked glycans (2 sites)"/>
</dbReference>
<dbReference type="iPTMnet" id="Q8N697"/>
<dbReference type="PhosphoSitePlus" id="Q8N697"/>
<dbReference type="SwissPalm" id="Q8N697"/>
<dbReference type="BioMuta" id="SLC15A4"/>
<dbReference type="DMDM" id="74751048"/>
<dbReference type="jPOST" id="Q8N697"/>
<dbReference type="MassIVE" id="Q8N697"/>
<dbReference type="PaxDb" id="9606-ENSP00000266771"/>
<dbReference type="PeptideAtlas" id="Q8N697"/>
<dbReference type="ProteomicsDB" id="72148">
    <molecule id="Q8N697-1"/>
</dbReference>
<dbReference type="ProteomicsDB" id="72149">
    <molecule id="Q8N697-2"/>
</dbReference>
<dbReference type="Pumba" id="Q8N697"/>
<dbReference type="Antibodypedia" id="3084">
    <property type="antibodies" value="58 antibodies from 16 providers"/>
</dbReference>
<dbReference type="DNASU" id="121260"/>
<dbReference type="Ensembl" id="ENST00000266771.10">
    <molecule id="Q8N697-1"/>
    <property type="protein sequence ID" value="ENSP00000266771.5"/>
    <property type="gene ID" value="ENSG00000139370.12"/>
</dbReference>
<dbReference type="GeneID" id="121260"/>
<dbReference type="KEGG" id="hsa:121260"/>
<dbReference type="MANE-Select" id="ENST00000266771.10">
    <property type="protein sequence ID" value="ENSP00000266771.5"/>
    <property type="RefSeq nucleotide sequence ID" value="NM_145648.4"/>
    <property type="RefSeq protein sequence ID" value="NP_663623.1"/>
</dbReference>
<dbReference type="UCSC" id="uc001uhu.3">
    <molecule id="Q8N697-1"/>
    <property type="organism name" value="human"/>
</dbReference>
<dbReference type="AGR" id="HGNC:23090"/>
<dbReference type="CTD" id="121260"/>
<dbReference type="DisGeNET" id="121260"/>
<dbReference type="GeneCards" id="SLC15A4"/>
<dbReference type="HGNC" id="HGNC:23090">
    <property type="gene designation" value="SLC15A4"/>
</dbReference>
<dbReference type="HPA" id="ENSG00000139370">
    <property type="expression patterns" value="Low tissue specificity"/>
</dbReference>
<dbReference type="MIM" id="615806">
    <property type="type" value="gene"/>
</dbReference>
<dbReference type="neXtProt" id="NX_Q8N697"/>
<dbReference type="OpenTargets" id="ENSG00000139370"/>
<dbReference type="PharmGKB" id="PA134928948"/>
<dbReference type="VEuPathDB" id="HostDB:ENSG00000139370"/>
<dbReference type="eggNOG" id="KOG1237">
    <property type="taxonomic scope" value="Eukaryota"/>
</dbReference>
<dbReference type="GeneTree" id="ENSGT00940000159361"/>
<dbReference type="HOGENOM" id="CLU_009313_6_1_1"/>
<dbReference type="InParanoid" id="Q8N697"/>
<dbReference type="OMA" id="QMMGVWF"/>
<dbReference type="OrthoDB" id="8904098at2759"/>
<dbReference type="PAN-GO" id="Q8N697">
    <property type="GO annotations" value="2 GO annotations based on evolutionary models"/>
</dbReference>
<dbReference type="PhylomeDB" id="Q8N697"/>
<dbReference type="TreeFam" id="TF330897"/>
<dbReference type="PathwayCommons" id="Q8N697"/>
<dbReference type="Reactome" id="R-HSA-427975">
    <property type="pathway name" value="Proton/oligopeptide cotransporters"/>
</dbReference>
<dbReference type="Reactome" id="R-HSA-6798695">
    <property type="pathway name" value="Neutrophil degranulation"/>
</dbReference>
<dbReference type="Reactome" id="R-HSA-9860276">
    <property type="pathway name" value="SLC15A4:TASL-dependent IRF5 activation"/>
</dbReference>
<dbReference type="SignaLink" id="Q8N697"/>
<dbReference type="BioGRID-ORCS" id="121260">
    <property type="hits" value="9 hits in 1161 CRISPR screens"/>
</dbReference>
<dbReference type="ChiTaRS" id="SLC15A4">
    <property type="organism name" value="human"/>
</dbReference>
<dbReference type="GenomeRNAi" id="121260"/>
<dbReference type="Pharos" id="Q8N697">
    <property type="development level" value="Tbio"/>
</dbReference>
<dbReference type="PRO" id="PR:Q8N697"/>
<dbReference type="Proteomes" id="UP000005640">
    <property type="component" value="Chromosome 12"/>
</dbReference>
<dbReference type="RNAct" id="Q8N697">
    <property type="molecule type" value="protein"/>
</dbReference>
<dbReference type="Bgee" id="ENSG00000139370">
    <property type="expression patterns" value="Expressed in pancreatic ductal cell and 189 other cell types or tissues"/>
</dbReference>
<dbReference type="ExpressionAtlas" id="Q8N697">
    <property type="expression patterns" value="baseline and differential"/>
</dbReference>
<dbReference type="GO" id="GO:0031901">
    <property type="term" value="C:early endosome membrane"/>
    <property type="evidence" value="ECO:0007669"/>
    <property type="project" value="UniProtKB-SubCell"/>
</dbReference>
<dbReference type="GO" id="GO:0036020">
    <property type="term" value="C:endolysosome membrane"/>
    <property type="evidence" value="ECO:0000314"/>
    <property type="project" value="UniProtKB"/>
</dbReference>
<dbReference type="GO" id="GO:0005765">
    <property type="term" value="C:lysosomal membrane"/>
    <property type="evidence" value="ECO:0000314"/>
    <property type="project" value="UniProtKB"/>
</dbReference>
<dbReference type="GO" id="GO:0016020">
    <property type="term" value="C:membrane"/>
    <property type="evidence" value="ECO:0000318"/>
    <property type="project" value="GO_Central"/>
</dbReference>
<dbReference type="GO" id="GO:0005886">
    <property type="term" value="C:plasma membrane"/>
    <property type="evidence" value="ECO:0000304"/>
    <property type="project" value="Reactome"/>
</dbReference>
<dbReference type="GO" id="GO:0035579">
    <property type="term" value="C:specific granule membrane"/>
    <property type="evidence" value="ECO:0000304"/>
    <property type="project" value="Reactome"/>
</dbReference>
<dbReference type="GO" id="GO:0071916">
    <property type="term" value="F:dipeptide transmembrane transporter activity"/>
    <property type="evidence" value="ECO:0000314"/>
    <property type="project" value="UniProtKB"/>
</dbReference>
<dbReference type="GO" id="GO:0005290">
    <property type="term" value="F:L-histidine transmembrane transporter activity"/>
    <property type="evidence" value="ECO:0000314"/>
    <property type="project" value="UniProtKB"/>
</dbReference>
<dbReference type="GO" id="GO:0015333">
    <property type="term" value="F:peptide:proton symporter activity"/>
    <property type="evidence" value="ECO:0000314"/>
    <property type="project" value="UniProtKB"/>
</dbReference>
<dbReference type="GO" id="GO:0015647">
    <property type="term" value="F:peptidoglycan transmembrane transporter activity"/>
    <property type="evidence" value="ECO:0000314"/>
    <property type="project" value="UniProtKB"/>
</dbReference>
<dbReference type="GO" id="GO:0140206">
    <property type="term" value="P:dipeptide import across plasma membrane"/>
    <property type="evidence" value="ECO:0000314"/>
    <property type="project" value="UniProtKB"/>
</dbReference>
<dbReference type="GO" id="GO:0015817">
    <property type="term" value="P:histidine transport"/>
    <property type="evidence" value="ECO:0000318"/>
    <property type="project" value="GO_Central"/>
</dbReference>
<dbReference type="GO" id="GO:0045087">
    <property type="term" value="P:innate immune response"/>
    <property type="evidence" value="ECO:0007669"/>
    <property type="project" value="UniProtKB-KW"/>
</dbReference>
<dbReference type="GO" id="GO:0089708">
    <property type="term" value="P:L-histidine transmembrane export from vacuole"/>
    <property type="evidence" value="ECO:0007669"/>
    <property type="project" value="Ensembl"/>
</dbReference>
<dbReference type="GO" id="GO:0033023">
    <property type="term" value="P:mast cell homeostasis"/>
    <property type="evidence" value="ECO:0000250"/>
    <property type="project" value="UniProtKB"/>
</dbReference>
<dbReference type="GO" id="GO:0006811">
    <property type="term" value="P:monoatomic ion transport"/>
    <property type="evidence" value="ECO:0000304"/>
    <property type="project" value="Reactome"/>
</dbReference>
<dbReference type="GO" id="GO:0015835">
    <property type="term" value="P:peptidoglycan transport"/>
    <property type="evidence" value="ECO:0000314"/>
    <property type="project" value="UniProtKB"/>
</dbReference>
<dbReference type="GO" id="GO:0045089">
    <property type="term" value="P:positive regulation of innate immune response"/>
    <property type="evidence" value="ECO:0000314"/>
    <property type="project" value="UniProtKB"/>
</dbReference>
<dbReference type="GO" id="GO:0070430">
    <property type="term" value="P:positive regulation of nucleotide-binding oligomerization domain containing 1 signaling pathway"/>
    <property type="evidence" value="ECO:0000250"/>
    <property type="project" value="UniProtKB"/>
</dbReference>
<dbReference type="GO" id="GO:0070434">
    <property type="term" value="P:positive regulation of nucleotide-binding oligomerization domain containing 2 signaling pathway"/>
    <property type="evidence" value="ECO:0000250"/>
    <property type="project" value="UniProtKB"/>
</dbReference>
<dbReference type="GO" id="GO:0034157">
    <property type="term" value="P:positive regulation of toll-like receptor 7 signaling pathway"/>
    <property type="evidence" value="ECO:0000315"/>
    <property type="project" value="UniProtKB"/>
</dbReference>
<dbReference type="GO" id="GO:0034161">
    <property type="term" value="P:positive regulation of toll-like receptor 8 signaling pathway"/>
    <property type="evidence" value="ECO:0000315"/>
    <property type="project" value="UniProtKB"/>
</dbReference>
<dbReference type="GO" id="GO:0034165">
    <property type="term" value="P:positive regulation of toll-like receptor 9 signaling pathway"/>
    <property type="evidence" value="ECO:0000315"/>
    <property type="project" value="UniProtKB"/>
</dbReference>
<dbReference type="GO" id="GO:0015031">
    <property type="term" value="P:protein transport"/>
    <property type="evidence" value="ECO:0007669"/>
    <property type="project" value="UniProtKB-KW"/>
</dbReference>
<dbReference type="GO" id="GO:0048302">
    <property type="term" value="P:regulation of isotype switching to IgG isotypes"/>
    <property type="evidence" value="ECO:0000250"/>
    <property type="project" value="UniProtKB"/>
</dbReference>
<dbReference type="GO" id="GO:0070424">
    <property type="term" value="P:regulation of nucleotide-binding domain, leucine rich repeat containing receptor signaling pathway"/>
    <property type="evidence" value="ECO:0000250"/>
    <property type="project" value="UniProtKB"/>
</dbReference>
<dbReference type="CDD" id="cd17348">
    <property type="entry name" value="MFS_SLC15A3_4"/>
    <property type="match status" value="1"/>
</dbReference>
<dbReference type="FunFam" id="1.20.1250.20:FF:000212">
    <property type="entry name" value="Solute carrier family 15 member 4"/>
    <property type="match status" value="1"/>
</dbReference>
<dbReference type="Gene3D" id="1.20.1250.20">
    <property type="entry name" value="MFS general substrate transporter like domains"/>
    <property type="match status" value="1"/>
</dbReference>
<dbReference type="InterPro" id="IPR036259">
    <property type="entry name" value="MFS_trans_sf"/>
</dbReference>
<dbReference type="InterPro" id="IPR000109">
    <property type="entry name" value="POT_fam"/>
</dbReference>
<dbReference type="InterPro" id="IPR018456">
    <property type="entry name" value="PTR2_symporter_CS"/>
</dbReference>
<dbReference type="PANTHER" id="PTHR11654">
    <property type="entry name" value="OLIGOPEPTIDE TRANSPORTER-RELATED"/>
    <property type="match status" value="1"/>
</dbReference>
<dbReference type="Pfam" id="PF00854">
    <property type="entry name" value="PTR2"/>
    <property type="match status" value="1"/>
</dbReference>
<dbReference type="SUPFAM" id="SSF103473">
    <property type="entry name" value="MFS general substrate transporter"/>
    <property type="match status" value="1"/>
</dbReference>
<dbReference type="PROSITE" id="PS01023">
    <property type="entry name" value="PTR2_2"/>
    <property type="match status" value="1"/>
</dbReference>
<gene>
    <name evidence="17" type="primary">SLC15A4</name>
    <name evidence="13 14" type="synonym">PHT1</name>
    <name evidence="15" type="synonym">PTR4</name>
    <name type="ORF">FP12591</name>
</gene>
<name>S15A4_HUMAN</name>
<keyword id="KW-0002">3D-structure</keyword>
<keyword id="KW-0025">Alternative splicing</keyword>
<keyword id="KW-0967">Endosome</keyword>
<keyword id="KW-0391">Immunity</keyword>
<keyword id="KW-0399">Innate immunity</keyword>
<keyword id="KW-0458">Lysosome</keyword>
<keyword id="KW-0472">Membrane</keyword>
<keyword id="KW-0571">Peptide transport</keyword>
<keyword id="KW-0597">Phosphoprotein</keyword>
<keyword id="KW-0653">Protein transport</keyword>
<keyword id="KW-1267">Proteomics identification</keyword>
<keyword id="KW-1185">Reference proteome</keyword>
<keyword id="KW-0769">Symport</keyword>
<keyword id="KW-0812">Transmembrane</keyword>
<keyword id="KW-1133">Transmembrane helix</keyword>
<keyword id="KW-0813">Transport</keyword>
<organism>
    <name type="scientific">Homo sapiens</name>
    <name type="common">Human</name>
    <dbReference type="NCBI Taxonomy" id="9606"/>
    <lineage>
        <taxon>Eukaryota</taxon>
        <taxon>Metazoa</taxon>
        <taxon>Chordata</taxon>
        <taxon>Craniata</taxon>
        <taxon>Vertebrata</taxon>
        <taxon>Euteleostomi</taxon>
        <taxon>Mammalia</taxon>
        <taxon>Eutheria</taxon>
        <taxon>Euarchontoglires</taxon>
        <taxon>Primates</taxon>
        <taxon>Haplorrhini</taxon>
        <taxon>Catarrhini</taxon>
        <taxon>Hominidae</taxon>
        <taxon>Homo</taxon>
    </lineage>
</organism>
<protein>
    <recommendedName>
        <fullName evidence="16">Solute carrier family 15 member 4</fullName>
    </recommendedName>
    <alternativeName>
        <fullName evidence="15">Peptide transporter 4</fullName>
    </alternativeName>
    <alternativeName>
        <fullName evidence="13 14">Peptide/histidine transporter 1</fullName>
        <shortName evidence="13 14">hPHT1</shortName>
    </alternativeName>
</protein>
<comment type="function">
    <text evidence="1 2 6 7 8 9 10">Proton-coupled amino-acid transporter that mediates the transmembrane transport of L-histidine and some di- and tripeptides from inside the lysosome to the cytosol, and plays a key role in innate immune response (PubMed:16289537, PubMed:25238095, PubMed:29224352). Able to transport a variety of di- and tripeptides, including carnosine and some peptidoglycans (PubMed:29224352, PubMed:31073693). Transporter activity is pH-dependent and maximized in the acidic lysosomal environment (By similarity). Involved in the detection of microbial pathogens by toll-like receptors (TLRs) and NOD-like receptors (NLRs), probably by mediating transport of bacterial peptidoglycans across the endolysosomal membrane: catalyzes the transport of certain bacterial peptidoglycans, such as muramyl dipeptide (MDP), the NOD2 ligand, and L-alanyl-gamma-D-glutamyl-meso-2,6-diaminoheptanedioate (tri-DAP), the NOD1 ligand (PubMed:25238095, PubMed:29224352). Required for TLR7, TLR8 and TLR9-mediated type I interferon (IFN-I) productions in plasmacytoid dendritic cells (pDCs) (PubMed:25238095). Independently of its transporter activity, also promotes the recruitment of innate immune adapter TASL to endolysosome downstream of TLR7, TLR8 and TLR9: TASL recruitment leads to the specific recruitment and activation of IRF5 (PubMed:32433612). Required for isotype class switch recombination to IgG2c isotype in response to TLR9 stimulation (By similarity). Required for mast cell secretory-granule homeostasis by limiting mast cell functions and inflammatory responses (By similarity).</text>
</comment>
<comment type="catalytic activity">
    <reaction evidence="8">
        <text>glycylglycylglycine(out) + n H(+)(out) = glycylglycylglycine(in) + n H(+)(in)</text>
        <dbReference type="Rhea" id="RHEA:76391"/>
        <dbReference type="ChEBI" id="CHEBI:15378"/>
        <dbReference type="ChEBI" id="CHEBI:195214"/>
    </reaction>
    <physiologicalReaction direction="left-to-right" evidence="8">
        <dbReference type="Rhea" id="RHEA:76392"/>
    </physiologicalReaction>
</comment>
<comment type="catalytic activity">
    <reaction evidence="8">
        <text>N-acetyl-D-muramoyl-L-alanyl-D-isoglutamine(out) + n H(+)(out) = N-acetyl-D-muramoyl-L-alanyl-D-isoglutamine(in) + n H(+)(in)</text>
        <dbReference type="Rhea" id="RHEA:76371"/>
        <dbReference type="ChEBI" id="CHEBI:15378"/>
        <dbReference type="ChEBI" id="CHEBI:155830"/>
    </reaction>
    <physiologicalReaction direction="left-to-right" evidence="8">
        <dbReference type="Rhea" id="RHEA:76372"/>
    </physiologicalReaction>
</comment>
<comment type="catalytic activity">
    <reaction evidence="7 8">
        <text>L-alanyl-gamma-D-glutamyl-meso-2,6-diaminopimelate(out) + n H(+)(out) = L-alanyl-gamma-D-glutamyl-meso-2,6-diaminopimelate(in) + n H(+)(in)</text>
        <dbReference type="Rhea" id="RHEA:64412"/>
        <dbReference type="ChEBI" id="CHEBI:15378"/>
        <dbReference type="ChEBI" id="CHEBI:61401"/>
    </reaction>
    <physiologicalReaction direction="left-to-right" evidence="7 8">
        <dbReference type="Rhea" id="RHEA:64413"/>
    </physiologicalReaction>
</comment>
<comment type="catalytic activity">
    <reaction evidence="6 9">
        <text>carnosine(out) + n H(+)(out) = carnosine(in) + n H(+)(in)</text>
        <dbReference type="Rhea" id="RHEA:76383"/>
        <dbReference type="ChEBI" id="CHEBI:15378"/>
        <dbReference type="ChEBI" id="CHEBI:57485"/>
    </reaction>
    <physiologicalReaction direction="left-to-right" evidence="9">
        <dbReference type="Rhea" id="RHEA:76384"/>
    </physiologicalReaction>
</comment>
<comment type="catalytic activity">
    <reaction evidence="6 7 8">
        <text>L-histidine(out) + n H(+)(out) = L-histidine(in) + n H(+)(in)</text>
        <dbReference type="Rhea" id="RHEA:76379"/>
        <dbReference type="ChEBI" id="CHEBI:15378"/>
        <dbReference type="ChEBI" id="CHEBI:57595"/>
    </reaction>
    <physiologicalReaction direction="left-to-right" evidence="6 7 8">
        <dbReference type="Rhea" id="RHEA:76380"/>
    </physiologicalReaction>
</comment>
<comment type="biophysicochemical properties">
    <kinetics>
        <KM evidence="8">16.3 uM for L-histidine</KM>
        <KM evidence="8">1690 uM for GlySar dipeptide</KM>
        <Vmax evidence="8">1317.0 pmol/min/mg enzyme with L-histidine as substrate</Vmax>
        <Vmax evidence="8">100.0 pmol/min/mg enzyme with GlySar dipeptide as substrate</Vmax>
    </kinetics>
</comment>
<comment type="subunit">
    <text evidence="10">Interacts with TASL; leading to TASL recruitment to endolysosome.</text>
</comment>
<comment type="interaction">
    <interactant intactId="EBI-4319594">
        <id>Q8N697</id>
    </interactant>
    <interactant intactId="EBI-7445625">
        <id>Q9HC29</id>
        <label>NOD2</label>
    </interactant>
    <organismsDiffer>false</organismsDiffer>
    <experiments>2</experiments>
</comment>
<comment type="interaction">
    <interactant intactId="EBI-4319594">
        <id>Q8N697</id>
    </interactant>
    <interactant intactId="EBI-12179023">
        <id>Q8IY34</id>
        <label>SLC15A3</label>
    </interactant>
    <organismsDiffer>false</organismsDiffer>
    <experiments>2</experiments>
</comment>
<comment type="interaction">
    <interactant intactId="EBI-4319594">
        <id>Q8N697</id>
    </interactant>
    <interactant intactId="EBI-21895669">
        <id>Q9HAI6</id>
        <label>TASL</label>
    </interactant>
    <organismsDiffer>false</organismsDiffer>
    <experiments>15</experiments>
</comment>
<comment type="subcellular location">
    <subcellularLocation>
        <location evidence="7 8 10">Lysosome membrane</location>
        <topology evidence="3">Multi-pass membrane protein</topology>
    </subcellularLocation>
    <subcellularLocation>
        <location evidence="10">Endosome membrane</location>
        <topology evidence="3">Multi-pass membrane protein</topology>
    </subcellularLocation>
    <subcellularLocation>
        <location evidence="2">Early endosome membrane</location>
        <topology evidence="3">Multi-pass membrane protein</topology>
    </subcellularLocation>
</comment>
<comment type="alternative products">
    <event type="alternative splicing"/>
    <isoform>
        <id>Q8N697-1</id>
        <name>1</name>
        <sequence type="displayed"/>
    </isoform>
    <isoform>
        <id>Q8N697-2</id>
        <name>2</name>
        <sequence type="described" ref="VSP_034052"/>
    </isoform>
</comment>
<comment type="tissue specificity">
    <text evidence="4 5 6">Highly expressed in skeletal muscle. Moderately expressed in kidney, liver, and heart. Weakly expressed in colon and brain. Expressed in low levels throughout the gastrointestinal tract and in Caco-2 cells. Expressed in retinal fragment epithelium (RPE) and neural retina. Expressed in small intestine, stomach, duodenum, jejunum, ileum and colon.</text>
</comment>
<comment type="similarity">
    <text evidence="16">Belongs to the major facilitator superfamily. Proton-dependent oligopeptide transporter (POT/PTR) (TC 2.A.17) family.</text>
</comment>
<comment type="sequence caution" evidence="16">
    <conflict type="frameshift">
        <sequence resource="EMBL-CDS" id="AAI46804"/>
    </conflict>
</comment>
<comment type="sequence caution" evidence="16">
    <conflict type="frameshift">
        <sequence resource="EMBL-CDS" id="AAK95565"/>
    </conflict>
</comment>
<comment type="sequence caution" evidence="16">
    <conflict type="frameshift">
        <sequence resource="EMBL-CDS" id="AAQ04807"/>
    </conflict>
</comment>
<feature type="chain" id="PRO_0000338599" description="Solute carrier family 15 member 4">
    <location>
        <begin position="1"/>
        <end position="577"/>
    </location>
</feature>
<feature type="transmembrane region" description="Helical" evidence="3">
    <location>
        <begin position="49"/>
        <end position="69"/>
    </location>
</feature>
<feature type="transmembrane region" description="Helical" evidence="3">
    <location>
        <begin position="76"/>
        <end position="96"/>
    </location>
</feature>
<feature type="transmembrane region" description="Helical" evidence="3">
    <location>
        <begin position="105"/>
        <end position="125"/>
    </location>
</feature>
<feature type="transmembrane region" description="Helical" evidence="3">
    <location>
        <begin position="158"/>
        <end position="178"/>
    </location>
</feature>
<feature type="transmembrane region" description="Helical" evidence="3">
    <location>
        <begin position="194"/>
        <end position="214"/>
    </location>
</feature>
<feature type="transmembrane region" description="Helical" evidence="3">
    <location>
        <begin position="222"/>
        <end position="242"/>
    </location>
</feature>
<feature type="transmembrane region" description="Helical" evidence="3">
    <location>
        <begin position="318"/>
        <end position="338"/>
    </location>
</feature>
<feature type="transmembrane region" description="Helical" evidence="3">
    <location>
        <begin position="363"/>
        <end position="383"/>
    </location>
</feature>
<feature type="transmembrane region" description="Helical" evidence="3">
    <location>
        <begin position="405"/>
        <end position="425"/>
    </location>
</feature>
<feature type="transmembrane region" description="Helical" evidence="3">
    <location>
        <begin position="459"/>
        <end position="479"/>
    </location>
</feature>
<feature type="transmembrane region" description="Helical" evidence="3">
    <location>
        <begin position="490"/>
        <end position="510"/>
    </location>
</feature>
<feature type="transmembrane region" description="Helical" evidence="3">
    <location>
        <begin position="535"/>
        <end position="555"/>
    </location>
</feature>
<feature type="modified residue" description="Phosphoserine" evidence="2">
    <location>
        <position position="279"/>
    </location>
</feature>
<feature type="modified residue" description="Phosphoserine" evidence="18">
    <location>
        <position position="298"/>
    </location>
</feature>
<feature type="splice variant" id="VSP_034052" description="In isoform 2." evidence="11 12">
    <location>
        <begin position="1"/>
        <end position="337"/>
    </location>
</feature>
<feature type="sequence variant" id="VAR_051611" description="In dbSNP:rs33990080.">
    <original>V</original>
    <variation>A</variation>
    <location>
        <position position="239"/>
    </location>
</feature>
<feature type="mutagenesis site" description="Abolished localization to the lysosome membrane and promotes relocalization to the plasma membrane; when associated with 318-A-A-319. Does not affect interaction with TASL." evidence="8 10">
    <original>LL</original>
    <variation>AA</variation>
    <location>
        <begin position="14"/>
        <end position="15"/>
    </location>
</feature>
<feature type="mutagenesis site" description="Does not affect interaction with TASL." evidence="10">
    <original>E</original>
    <variation>A</variation>
    <location>
        <position position="44"/>
    </location>
</feature>
<feature type="mutagenesis site" description="Does not affect interaction with TASL." evidence="10">
    <original>E</original>
    <variation>A</variation>
    <location>
        <position position="47"/>
    </location>
</feature>
<feature type="mutagenesis site" description="Abolished localization to the lysosome membrane and promotes relocalization to the plasma membrane; when associated with 14-A-A-15." evidence="8">
    <original>LV</original>
    <variation>AA</variation>
    <location>
        <begin position="318"/>
        <end position="319"/>
    </location>
</feature>
<feature type="mutagenesis site" description="Abolished transmembrane transporter activity. Abolished interaction with TASL." evidence="7 10">
    <original>E</original>
    <variation>K</variation>
    <location>
        <position position="465"/>
    </location>
</feature>
<feature type="sequence conflict" description="In Ref. 6; AAI46804." evidence="16" ref="6">
    <original>A</original>
    <variation>T</variation>
    <location>
        <position position="24"/>
    </location>
</feature>
<feature type="sequence conflict" description="In Ref. 1; AAK95565." evidence="16" ref="1">
    <original>RA</original>
    <variation>LL</variation>
    <location>
        <begin position="34"/>
        <end position="35"/>
    </location>
</feature>
<feature type="sequence conflict" description="In Ref. 6; AAI46804." evidence="16" ref="6">
    <original>E</original>
    <variation>G</variation>
    <location>
        <position position="44"/>
    </location>
</feature>
<feature type="helix" evidence="19">
    <location>
        <begin position="19"/>
        <end position="25"/>
    </location>
</feature>
<feature type="helix" evidence="19">
    <location>
        <begin position="34"/>
        <end position="55"/>
    </location>
</feature>
<feature type="helix" evidence="19">
    <location>
        <begin position="58"/>
        <end position="62"/>
    </location>
</feature>
<feature type="strand" evidence="19">
    <location>
        <begin position="63"/>
        <end position="66"/>
    </location>
</feature>
<feature type="helix" evidence="19">
    <location>
        <begin position="71"/>
        <end position="87"/>
    </location>
</feature>
<feature type="helix" evidence="19">
    <location>
        <begin position="89"/>
        <end position="98"/>
    </location>
</feature>
<feature type="helix" evidence="19">
    <location>
        <begin position="103"/>
        <end position="115"/>
    </location>
</feature>
<feature type="turn" evidence="19">
    <location>
        <begin position="116"/>
        <end position="118"/>
    </location>
</feature>
<feature type="helix" evidence="19">
    <location>
        <begin position="119"/>
        <end position="124"/>
    </location>
</feature>
<feature type="helix" evidence="19">
    <location>
        <begin position="126"/>
        <end position="133"/>
    </location>
</feature>
<feature type="helix" evidence="19">
    <location>
        <begin position="154"/>
        <end position="180"/>
    </location>
</feature>
<feature type="turn" evidence="20">
    <location>
        <begin position="183"/>
        <end position="185"/>
    </location>
</feature>
<feature type="helix" evidence="19">
    <location>
        <begin position="187"/>
        <end position="211"/>
    </location>
</feature>
<feature type="helix" evidence="19">
    <location>
        <begin position="213"/>
        <end position="219"/>
    </location>
</feature>
<feature type="helix" evidence="19">
    <location>
        <begin position="222"/>
        <end position="243"/>
    </location>
</feature>
<feature type="turn" evidence="19">
    <location>
        <begin position="244"/>
        <end position="246"/>
    </location>
</feature>
<feature type="helix" evidence="20">
    <location>
        <begin position="257"/>
        <end position="272"/>
    </location>
</feature>
<feature type="helix" evidence="20">
    <location>
        <begin position="297"/>
        <end position="304"/>
    </location>
</feature>
<feature type="strand" evidence="21">
    <location>
        <begin position="309"/>
        <end position="311"/>
    </location>
</feature>
<feature type="helix" evidence="19">
    <location>
        <begin position="314"/>
        <end position="327"/>
    </location>
</feature>
<feature type="helix" evidence="19">
    <location>
        <begin position="329"/>
        <end position="347"/>
    </location>
</feature>
<feature type="helix" evidence="20">
    <location>
        <begin position="353"/>
        <end position="355"/>
    </location>
</feature>
<feature type="helix" evidence="19">
    <location>
        <begin position="366"/>
        <end position="370"/>
    </location>
</feature>
<feature type="helix" evidence="19">
    <location>
        <begin position="371"/>
        <end position="387"/>
    </location>
</feature>
<feature type="turn" evidence="19">
    <location>
        <begin position="388"/>
        <end position="390"/>
    </location>
</feature>
<feature type="helix" evidence="19">
    <location>
        <begin position="391"/>
        <end position="394"/>
    </location>
</feature>
<feature type="helix" evidence="19">
    <location>
        <begin position="401"/>
        <end position="429"/>
    </location>
</feature>
<feature type="turn" evidence="19">
    <location>
        <begin position="430"/>
        <end position="432"/>
    </location>
</feature>
<feature type="strand" evidence="19">
    <location>
        <begin position="435"/>
        <end position="439"/>
    </location>
</feature>
<feature type="strand" evidence="19">
    <location>
        <begin position="442"/>
        <end position="446"/>
    </location>
</feature>
<feature type="strand" evidence="19">
    <location>
        <begin position="448"/>
        <end position="450"/>
    </location>
</feature>
<feature type="helix" evidence="19">
    <location>
        <begin position="451"/>
        <end position="454"/>
    </location>
</feature>
<feature type="helix" evidence="19">
    <location>
        <begin position="455"/>
        <end position="478"/>
    </location>
</feature>
<feature type="strand" evidence="19">
    <location>
        <begin position="482"/>
        <end position="484"/>
    </location>
</feature>
<feature type="turn" evidence="19">
    <location>
        <begin position="485"/>
        <end position="487"/>
    </location>
</feature>
<feature type="helix" evidence="19">
    <location>
        <begin position="488"/>
        <end position="509"/>
    </location>
</feature>
<feature type="turn" evidence="19">
    <location>
        <begin position="513"/>
        <end position="515"/>
    </location>
</feature>
<feature type="strand" evidence="20">
    <location>
        <begin position="517"/>
        <end position="520"/>
    </location>
</feature>
<feature type="strand" evidence="20">
    <location>
        <begin position="522"/>
        <end position="524"/>
    </location>
</feature>
<feature type="helix" evidence="20">
    <location>
        <begin position="527"/>
        <end position="529"/>
    </location>
</feature>
<feature type="helix" evidence="19">
    <location>
        <begin position="532"/>
        <end position="557"/>
    </location>
</feature>
<feature type="turn" evidence="22">
    <location>
        <begin position="559"/>
        <end position="563"/>
    </location>
</feature>
<reference key="1">
    <citation type="submission" date="2001-08" db="EMBL/GenBank/DDBJ databases">
        <title>Cloning of a human novel gene with product of peptide/histidine.</title>
        <authorList>
            <person name="Guo J.H."/>
            <person name="Yu L."/>
        </authorList>
    </citation>
    <scope>NUCLEOTIDE SEQUENCE [MRNA] (ISOFORM 1)</scope>
</reference>
<reference key="2">
    <citation type="submission" date="2002-07" db="EMBL/GenBank/DDBJ databases">
        <title>Molecular cloning of a human brain peptide/histidine transporter, PTR4.</title>
        <authorList>
            <person name="Mondon P."/>
            <person name="Bouayadi K."/>
            <person name="Fournier J."/>
            <person name="Saubusse P."/>
            <person name="Lablie C."/>
        </authorList>
    </citation>
    <scope>NUCLEOTIDE SEQUENCE [MRNA] (ISOFORM 1)</scope>
    <source>
        <tissue>Brain</tissue>
    </source>
</reference>
<reference key="3">
    <citation type="journal article" date="2004" name="Proc. Natl. Acad. Sci. U.S.A.">
        <title>Large-scale cDNA transfection screening for genes related to cancer development and progression.</title>
        <authorList>
            <person name="Wan D."/>
            <person name="Gong Y."/>
            <person name="Qin W."/>
            <person name="Zhang P."/>
            <person name="Li J."/>
            <person name="Wei L."/>
            <person name="Zhou X."/>
            <person name="Li H."/>
            <person name="Qiu X."/>
            <person name="Zhong F."/>
            <person name="He L."/>
            <person name="Yu J."/>
            <person name="Yao G."/>
            <person name="Jiang H."/>
            <person name="Qian L."/>
            <person name="Yu Y."/>
            <person name="Shu H."/>
            <person name="Chen X."/>
            <person name="Xu H."/>
            <person name="Guo M."/>
            <person name="Pan Z."/>
            <person name="Chen Y."/>
            <person name="Ge C."/>
            <person name="Yang S."/>
            <person name="Gu J."/>
        </authorList>
    </citation>
    <scope>NUCLEOTIDE SEQUENCE [LARGE SCALE MRNA] (ISOFORM 2)</scope>
</reference>
<reference key="4">
    <citation type="journal article" date="2004" name="Nat. Genet.">
        <title>Complete sequencing and characterization of 21,243 full-length human cDNAs.</title>
        <authorList>
            <person name="Ota T."/>
            <person name="Suzuki Y."/>
            <person name="Nishikawa T."/>
            <person name="Otsuki T."/>
            <person name="Sugiyama T."/>
            <person name="Irie R."/>
            <person name="Wakamatsu A."/>
            <person name="Hayashi K."/>
            <person name="Sato H."/>
            <person name="Nagai K."/>
            <person name="Kimura K."/>
            <person name="Makita H."/>
            <person name="Sekine M."/>
            <person name="Obayashi M."/>
            <person name="Nishi T."/>
            <person name="Shibahara T."/>
            <person name="Tanaka T."/>
            <person name="Ishii S."/>
            <person name="Yamamoto J."/>
            <person name="Saito K."/>
            <person name="Kawai Y."/>
            <person name="Isono Y."/>
            <person name="Nakamura Y."/>
            <person name="Nagahari K."/>
            <person name="Murakami K."/>
            <person name="Yasuda T."/>
            <person name="Iwayanagi T."/>
            <person name="Wagatsuma M."/>
            <person name="Shiratori A."/>
            <person name="Sudo H."/>
            <person name="Hosoiri T."/>
            <person name="Kaku Y."/>
            <person name="Kodaira H."/>
            <person name="Kondo H."/>
            <person name="Sugawara M."/>
            <person name="Takahashi M."/>
            <person name="Kanda K."/>
            <person name="Yokoi T."/>
            <person name="Furuya T."/>
            <person name="Kikkawa E."/>
            <person name="Omura Y."/>
            <person name="Abe K."/>
            <person name="Kamihara K."/>
            <person name="Katsuta N."/>
            <person name="Sato K."/>
            <person name="Tanikawa M."/>
            <person name="Yamazaki M."/>
            <person name="Ninomiya K."/>
            <person name="Ishibashi T."/>
            <person name="Yamashita H."/>
            <person name="Murakawa K."/>
            <person name="Fujimori K."/>
            <person name="Tanai H."/>
            <person name="Kimata M."/>
            <person name="Watanabe M."/>
            <person name="Hiraoka S."/>
            <person name="Chiba Y."/>
            <person name="Ishida S."/>
            <person name="Ono Y."/>
            <person name="Takiguchi S."/>
            <person name="Watanabe S."/>
            <person name="Yosida M."/>
            <person name="Hotuta T."/>
            <person name="Kusano J."/>
            <person name="Kanehori K."/>
            <person name="Takahashi-Fujii A."/>
            <person name="Hara H."/>
            <person name="Tanase T.-O."/>
            <person name="Nomura Y."/>
            <person name="Togiya S."/>
            <person name="Komai F."/>
            <person name="Hara R."/>
            <person name="Takeuchi K."/>
            <person name="Arita M."/>
            <person name="Imose N."/>
            <person name="Musashino K."/>
            <person name="Yuuki H."/>
            <person name="Oshima A."/>
            <person name="Sasaki N."/>
            <person name="Aotsuka S."/>
            <person name="Yoshikawa Y."/>
            <person name="Matsunawa H."/>
            <person name="Ichihara T."/>
            <person name="Shiohata N."/>
            <person name="Sano S."/>
            <person name="Moriya S."/>
            <person name="Momiyama H."/>
            <person name="Satoh N."/>
            <person name="Takami S."/>
            <person name="Terashima Y."/>
            <person name="Suzuki O."/>
            <person name="Nakagawa S."/>
            <person name="Senoh A."/>
            <person name="Mizoguchi H."/>
            <person name="Goto Y."/>
            <person name="Shimizu F."/>
            <person name="Wakebe H."/>
            <person name="Hishigaki H."/>
            <person name="Watanabe T."/>
            <person name="Sugiyama A."/>
            <person name="Takemoto M."/>
            <person name="Kawakami B."/>
            <person name="Yamazaki M."/>
            <person name="Watanabe K."/>
            <person name="Kumagai A."/>
            <person name="Itakura S."/>
            <person name="Fukuzumi Y."/>
            <person name="Fujimori Y."/>
            <person name="Komiyama M."/>
            <person name="Tashiro H."/>
            <person name="Tanigami A."/>
            <person name="Fujiwara T."/>
            <person name="Ono T."/>
            <person name="Yamada K."/>
            <person name="Fujii Y."/>
            <person name="Ozaki K."/>
            <person name="Hirao M."/>
            <person name="Ohmori Y."/>
            <person name="Kawabata A."/>
            <person name="Hikiji T."/>
            <person name="Kobatake N."/>
            <person name="Inagaki H."/>
            <person name="Ikema Y."/>
            <person name="Okamoto S."/>
            <person name="Okitani R."/>
            <person name="Kawakami T."/>
            <person name="Noguchi S."/>
            <person name="Itoh T."/>
            <person name="Shigeta K."/>
            <person name="Senba T."/>
            <person name="Matsumura K."/>
            <person name="Nakajima Y."/>
            <person name="Mizuno T."/>
            <person name="Morinaga M."/>
            <person name="Sasaki M."/>
            <person name="Togashi T."/>
            <person name="Oyama M."/>
            <person name="Hata H."/>
            <person name="Watanabe M."/>
            <person name="Komatsu T."/>
            <person name="Mizushima-Sugano J."/>
            <person name="Satoh T."/>
            <person name="Shirai Y."/>
            <person name="Takahashi Y."/>
            <person name="Nakagawa K."/>
            <person name="Okumura K."/>
            <person name="Nagase T."/>
            <person name="Nomura N."/>
            <person name="Kikuchi H."/>
            <person name="Masuho Y."/>
            <person name="Yamashita R."/>
            <person name="Nakai K."/>
            <person name="Yada T."/>
            <person name="Nakamura Y."/>
            <person name="Ohara O."/>
            <person name="Isogai T."/>
            <person name="Sugano S."/>
        </authorList>
    </citation>
    <scope>NUCLEOTIDE SEQUENCE [LARGE SCALE MRNA] (ISOFORM 2)</scope>
    <source>
        <tissue>Brain</tissue>
    </source>
</reference>
<reference key="5">
    <citation type="submission" date="2005-07" db="EMBL/GenBank/DDBJ databases">
        <authorList>
            <person name="Mural R.J."/>
            <person name="Istrail S."/>
            <person name="Sutton G.G."/>
            <person name="Florea L."/>
            <person name="Halpern A.L."/>
            <person name="Mobarry C.M."/>
            <person name="Lippert R."/>
            <person name="Walenz B."/>
            <person name="Shatkay H."/>
            <person name="Dew I."/>
            <person name="Miller J.R."/>
            <person name="Flanigan M.J."/>
            <person name="Edwards N.J."/>
            <person name="Bolanos R."/>
            <person name="Fasulo D."/>
            <person name="Halldorsson B.V."/>
            <person name="Hannenhalli S."/>
            <person name="Turner R."/>
            <person name="Yooseph S."/>
            <person name="Lu F."/>
            <person name="Nusskern D.R."/>
            <person name="Shue B.C."/>
            <person name="Zheng X.H."/>
            <person name="Zhong F."/>
            <person name="Delcher A.L."/>
            <person name="Huson D.H."/>
            <person name="Kravitz S.A."/>
            <person name="Mouchard L."/>
            <person name="Reinert K."/>
            <person name="Remington K.A."/>
            <person name="Clark A.G."/>
            <person name="Waterman M.S."/>
            <person name="Eichler E.E."/>
            <person name="Adams M.D."/>
            <person name="Hunkapiller M.W."/>
            <person name="Myers E.W."/>
            <person name="Venter J.C."/>
        </authorList>
    </citation>
    <scope>NUCLEOTIDE SEQUENCE [LARGE SCALE GENOMIC DNA]</scope>
</reference>
<reference key="6">
    <citation type="journal article" date="2004" name="Genome Res.">
        <title>The status, quality, and expansion of the NIH full-length cDNA project: the Mammalian Gene Collection (MGC).</title>
        <authorList>
            <consortium name="The MGC Project Team"/>
        </authorList>
    </citation>
    <scope>NUCLEOTIDE SEQUENCE [LARGE SCALE MRNA] (ISOFORM 1)</scope>
    <source>
        <tissue>Brain</tissue>
    </source>
</reference>
<reference key="7">
    <citation type="journal article" date="2000" name="AAPS PharmSci">
        <title>Human proton/oligopeptide transporter (POT) genes: identification of putative human genes using bioinformatics.</title>
        <authorList>
            <person name="Botka C.W."/>
            <person name="Wittig T.W."/>
            <person name="Graul R.C."/>
            <person name="Nielsen C.U."/>
            <person name="Higaki K."/>
            <person name="Amidon G.L."/>
            <person name="Sadee W."/>
        </authorList>
    </citation>
    <scope>TISSUE SPECIFICITY</scope>
</reference>
<reference key="8">
    <citation type="journal article" date="2001" name="AAPS PharmSci">
        <title>Spatial expression patterns of peptide transporters in the human and rat gastrointestinal tracts, Caco-2 in vitro cell culture model, and multiple human tissues.</title>
        <authorList>
            <person name="Herrera-Ruiz D."/>
            <person name="Wang Q."/>
            <person name="Gudmundsson O.S."/>
            <person name="Cook T.J."/>
            <person name="Smith R.L."/>
            <person name="Faria T.N."/>
            <person name="Knipp G.T."/>
        </authorList>
    </citation>
    <scope>TISSUE SPECIFICITY</scope>
</reference>
<reference key="9">
    <citation type="journal article" date="2006" name="Eur. J. Pharm. Sci.">
        <title>The functional evaluation of human peptide/histidine transporter 1 (hPHT1) in transiently transfected COS-7 cells.</title>
        <authorList>
            <person name="Bhardwaj R.K."/>
            <person name="Herrera-Ruiz D."/>
            <person name="Eltoukhy N."/>
            <person name="Saad M."/>
            <person name="Knipp G.T."/>
        </authorList>
    </citation>
    <scope>FUNCTION</scope>
    <scope>TRANSPORTER ACTIVITY</scope>
    <scope>TISSUE SPECIFICITY</scope>
</reference>
<reference key="10">
    <citation type="journal article" date="2013" name="J. Proteome Res.">
        <title>Toward a comprehensive characterization of a human cancer cell phosphoproteome.</title>
        <authorList>
            <person name="Zhou H."/>
            <person name="Di Palma S."/>
            <person name="Preisinger C."/>
            <person name="Peng M."/>
            <person name="Polat A.N."/>
            <person name="Heck A.J."/>
            <person name="Mohammed S."/>
        </authorList>
    </citation>
    <scope>PHOSPHORYLATION [LARGE SCALE ANALYSIS] AT SER-298</scope>
    <scope>IDENTIFICATION BY MASS SPECTROMETRY [LARGE SCALE ANALYSIS]</scope>
    <source>
        <tissue>Erythroleukemia</tissue>
    </source>
</reference>
<reference key="11">
    <citation type="journal article" date="2014" name="Immunity">
        <title>The histidine transporter SLC15A4 coordinates mTOR-dependent inflammatory responses and pathogenic antibody production.</title>
        <authorList>
            <person name="Kobayashi T."/>
            <person name="Shimabukuro-Demoto S."/>
            <person name="Yoshida-Sugitani R."/>
            <person name="Furuyama-Tanaka K."/>
            <person name="Karyu H."/>
            <person name="Sugiura Y."/>
            <person name="Shimizu Y."/>
            <person name="Hosaka T."/>
            <person name="Goto M."/>
            <person name="Kato N."/>
            <person name="Okamura T."/>
            <person name="Suematsu M."/>
            <person name="Yokoyama S."/>
            <person name="Toyama-Sorimachi N."/>
        </authorList>
    </citation>
    <scope>FUNCTION</scope>
    <scope>TRANSPORTER ACTIVITY</scope>
    <scope>SUBCELLULAR LOCATION</scope>
    <scope>MUTAGENESIS OF GLU-465</scope>
</reference>
<reference key="12">
    <citation type="journal article" date="2018" name="Mol. Pharm.">
        <title>Functional characterization of human peptide/histidine transporter 1 in stably transfected MDCK Cells.</title>
        <authorList>
            <person name="Song F."/>
            <person name="Hu Y."/>
            <person name="Wang Y."/>
            <person name="Smith D.E."/>
            <person name="Jiang H."/>
        </authorList>
    </citation>
    <scope>FUNCTION</scope>
    <scope>TRANSPORTER ACTIVITY</scope>
    <scope>BIOPHYSICOCHEMICAL PROPERTIES</scope>
    <scope>SUBCELLULAR LOCATION</scope>
    <scope>MUTAGENESIS OF 14-LEU-LEU-15 AND 318-LEU-VAL-319</scope>
</reference>
<reference key="13">
    <citation type="journal article" date="2019" name="Amino Acids">
        <title>The proton-coupled oligopeptide transporters PEPT2, PHT1 and PHT2 mediate the uptake of carnosine in glioblastoma cells.</title>
        <authorList>
            <person name="Oppermann H."/>
            <person name="Heinrich M."/>
            <person name="Birkemeyer C."/>
            <person name="Meixensberger J."/>
            <person name="Gaunitz F."/>
        </authorList>
    </citation>
    <scope>FUNCTION</scope>
    <scope>TRANSPORTER ACTIVITY</scope>
</reference>
<reference key="14">
    <citation type="journal article" date="2020" name="Nature">
        <title>TASL is the SLC15A4-associated adaptor for IRF5 activation by TLR7-9.</title>
        <authorList>
            <person name="Heinz L.X."/>
            <person name="Lee J."/>
            <person name="Kapoor U."/>
            <person name="Kartnig F."/>
            <person name="Sedlyarov V."/>
            <person name="Papakostas K."/>
            <person name="Cesar-Razquin A."/>
            <person name="Essletzbichler P."/>
            <person name="Goldmann U."/>
            <person name="Stefanovic A."/>
            <person name="Bigenzahn J.W."/>
            <person name="Scorzoni S."/>
            <person name="Pizzagalli M.D."/>
            <person name="Bensimon A."/>
            <person name="Mueller A.C."/>
            <person name="King F.J."/>
            <person name="Li J."/>
            <person name="Girardi E."/>
            <person name="Mbow M.L."/>
            <person name="Whitehurst C.E."/>
            <person name="Rebsamen M."/>
            <person name="Superti-Furga G."/>
        </authorList>
    </citation>
    <scope>FUNCTION</scope>
    <scope>SUBCELLULAR LOCATION</scope>
    <scope>INTERACTION WITH TASL</scope>
    <scope>MUTAGENESIS OF 14-LEU-LEU-15; GLU-44; GLU-47 AND GLU-465</scope>
</reference>